<accession>Q324L0</accession>
<dbReference type="EC" id="7.2.2.6" evidence="1"/>
<dbReference type="EMBL" id="CP000036">
    <property type="protein sequence ID" value="ABB65248.1"/>
    <property type="molecule type" value="Genomic_DNA"/>
</dbReference>
<dbReference type="RefSeq" id="WP_000087963.1">
    <property type="nucleotide sequence ID" value="NC_007613.1"/>
</dbReference>
<dbReference type="SMR" id="Q324L0"/>
<dbReference type="KEGG" id="sbo:SBO_0559"/>
<dbReference type="HOGENOM" id="CLU_025728_2_0_6"/>
<dbReference type="Proteomes" id="UP000007067">
    <property type="component" value="Chromosome"/>
</dbReference>
<dbReference type="GO" id="GO:0005886">
    <property type="term" value="C:plasma membrane"/>
    <property type="evidence" value="ECO:0007669"/>
    <property type="project" value="UniProtKB-SubCell"/>
</dbReference>
<dbReference type="GO" id="GO:0005524">
    <property type="term" value="F:ATP binding"/>
    <property type="evidence" value="ECO:0007669"/>
    <property type="project" value="UniProtKB-UniRule"/>
</dbReference>
<dbReference type="GO" id="GO:0016887">
    <property type="term" value="F:ATP hydrolysis activity"/>
    <property type="evidence" value="ECO:0007669"/>
    <property type="project" value="InterPro"/>
</dbReference>
<dbReference type="GO" id="GO:0000287">
    <property type="term" value="F:magnesium ion binding"/>
    <property type="evidence" value="ECO:0007669"/>
    <property type="project" value="UniProtKB-UniRule"/>
</dbReference>
<dbReference type="GO" id="GO:0008556">
    <property type="term" value="F:P-type potassium transmembrane transporter activity"/>
    <property type="evidence" value="ECO:0007669"/>
    <property type="project" value="UniProtKB-UniRule"/>
</dbReference>
<dbReference type="CDD" id="cd02078">
    <property type="entry name" value="P-type_ATPase_K"/>
    <property type="match status" value="1"/>
</dbReference>
<dbReference type="FunFam" id="2.70.150.10:FF:000010">
    <property type="entry name" value="Potassium-transporting ATPase ATP-binding subunit"/>
    <property type="match status" value="1"/>
</dbReference>
<dbReference type="FunFam" id="3.40.1110.10:FF:000007">
    <property type="entry name" value="Potassium-transporting ATPase ATP-binding subunit"/>
    <property type="match status" value="1"/>
</dbReference>
<dbReference type="Gene3D" id="3.40.1110.10">
    <property type="entry name" value="Calcium-transporting ATPase, cytoplasmic domain N"/>
    <property type="match status" value="1"/>
</dbReference>
<dbReference type="Gene3D" id="2.70.150.10">
    <property type="entry name" value="Calcium-transporting ATPase, cytoplasmic transduction domain A"/>
    <property type="match status" value="1"/>
</dbReference>
<dbReference type="Gene3D" id="3.40.50.1000">
    <property type="entry name" value="HAD superfamily/HAD-like"/>
    <property type="match status" value="1"/>
</dbReference>
<dbReference type="HAMAP" id="MF_00285">
    <property type="entry name" value="KdpB"/>
    <property type="match status" value="1"/>
</dbReference>
<dbReference type="InterPro" id="IPR023299">
    <property type="entry name" value="ATPase_P-typ_cyto_dom_N"/>
</dbReference>
<dbReference type="InterPro" id="IPR018303">
    <property type="entry name" value="ATPase_P-typ_P_site"/>
</dbReference>
<dbReference type="InterPro" id="IPR023298">
    <property type="entry name" value="ATPase_P-typ_TM_dom_sf"/>
</dbReference>
<dbReference type="InterPro" id="IPR008250">
    <property type="entry name" value="ATPase_P-typ_transduc_dom_A_sf"/>
</dbReference>
<dbReference type="InterPro" id="IPR036412">
    <property type="entry name" value="HAD-like_sf"/>
</dbReference>
<dbReference type="InterPro" id="IPR023214">
    <property type="entry name" value="HAD_sf"/>
</dbReference>
<dbReference type="InterPro" id="IPR006391">
    <property type="entry name" value="P-type_ATPase_bsu_IA"/>
</dbReference>
<dbReference type="InterPro" id="IPR001757">
    <property type="entry name" value="P_typ_ATPase"/>
</dbReference>
<dbReference type="InterPro" id="IPR044492">
    <property type="entry name" value="P_typ_ATPase_HD_dom"/>
</dbReference>
<dbReference type="NCBIfam" id="TIGR01494">
    <property type="entry name" value="ATPase_P-type"/>
    <property type="match status" value="2"/>
</dbReference>
<dbReference type="NCBIfam" id="TIGR01497">
    <property type="entry name" value="kdpB"/>
    <property type="match status" value="1"/>
</dbReference>
<dbReference type="PANTHER" id="PTHR43743">
    <property type="entry name" value="POTASSIUM-TRANSPORTING ATPASE ATP-BINDING SUBUNIT"/>
    <property type="match status" value="1"/>
</dbReference>
<dbReference type="PANTHER" id="PTHR43743:SF1">
    <property type="entry name" value="POTASSIUM-TRANSPORTING ATPASE ATP-BINDING SUBUNIT"/>
    <property type="match status" value="1"/>
</dbReference>
<dbReference type="Pfam" id="PF00122">
    <property type="entry name" value="E1-E2_ATPase"/>
    <property type="match status" value="1"/>
</dbReference>
<dbReference type="Pfam" id="PF00702">
    <property type="entry name" value="Hydrolase"/>
    <property type="match status" value="1"/>
</dbReference>
<dbReference type="PRINTS" id="PR00119">
    <property type="entry name" value="CATATPASE"/>
</dbReference>
<dbReference type="SFLD" id="SFLDS00003">
    <property type="entry name" value="Haloacid_Dehalogenase"/>
    <property type="match status" value="1"/>
</dbReference>
<dbReference type="SFLD" id="SFLDF00027">
    <property type="entry name" value="p-type_atpase"/>
    <property type="match status" value="1"/>
</dbReference>
<dbReference type="SUPFAM" id="SSF81653">
    <property type="entry name" value="Calcium ATPase, transduction domain A"/>
    <property type="match status" value="1"/>
</dbReference>
<dbReference type="SUPFAM" id="SSF81665">
    <property type="entry name" value="Calcium ATPase, transmembrane domain M"/>
    <property type="match status" value="1"/>
</dbReference>
<dbReference type="SUPFAM" id="SSF56784">
    <property type="entry name" value="HAD-like"/>
    <property type="match status" value="1"/>
</dbReference>
<dbReference type="SUPFAM" id="SSF81660">
    <property type="entry name" value="Metal cation-transporting ATPase, ATP-binding domain N"/>
    <property type="match status" value="1"/>
</dbReference>
<dbReference type="PROSITE" id="PS00154">
    <property type="entry name" value="ATPASE_E1_E2"/>
    <property type="match status" value="1"/>
</dbReference>
<proteinExistence type="inferred from homology"/>
<comment type="function">
    <text evidence="1">Part of the high-affinity ATP-driven potassium transport (or Kdp) system, which catalyzes the hydrolysis of ATP coupled with the electrogenic transport of potassium into the cytoplasm. This subunit is responsible for energy coupling to the transport system and for the release of the potassium ions to the cytoplasm.</text>
</comment>
<comment type="catalytic activity">
    <reaction evidence="1">
        <text>K(+)(out) + ATP + H2O = K(+)(in) + ADP + phosphate + H(+)</text>
        <dbReference type="Rhea" id="RHEA:16777"/>
        <dbReference type="ChEBI" id="CHEBI:15377"/>
        <dbReference type="ChEBI" id="CHEBI:15378"/>
        <dbReference type="ChEBI" id="CHEBI:29103"/>
        <dbReference type="ChEBI" id="CHEBI:30616"/>
        <dbReference type="ChEBI" id="CHEBI:43474"/>
        <dbReference type="ChEBI" id="CHEBI:456216"/>
        <dbReference type="EC" id="7.2.2.6"/>
    </reaction>
    <physiologicalReaction direction="left-to-right" evidence="1">
        <dbReference type="Rhea" id="RHEA:16778"/>
    </physiologicalReaction>
</comment>
<comment type="subunit">
    <text evidence="1">The system is composed of three essential subunits: KdpA, KdpB and KdpC.</text>
</comment>
<comment type="subcellular location">
    <subcellularLocation>
        <location evidence="1">Cell inner membrane</location>
        <topology evidence="1">Multi-pass membrane protein</topology>
    </subcellularLocation>
</comment>
<comment type="similarity">
    <text evidence="1">Belongs to the cation transport ATPase (P-type) (TC 3.A.3) family. Type IA subfamily.</text>
</comment>
<reference key="1">
    <citation type="journal article" date="2005" name="Nucleic Acids Res.">
        <title>Genome dynamics and diversity of Shigella species, the etiologic agents of bacillary dysentery.</title>
        <authorList>
            <person name="Yang F."/>
            <person name="Yang J."/>
            <person name="Zhang X."/>
            <person name="Chen L."/>
            <person name="Jiang Y."/>
            <person name="Yan Y."/>
            <person name="Tang X."/>
            <person name="Wang J."/>
            <person name="Xiong Z."/>
            <person name="Dong J."/>
            <person name="Xue Y."/>
            <person name="Zhu Y."/>
            <person name="Xu X."/>
            <person name="Sun L."/>
            <person name="Chen S."/>
            <person name="Nie H."/>
            <person name="Peng J."/>
            <person name="Xu J."/>
            <person name="Wang Y."/>
            <person name="Yuan Z."/>
            <person name="Wen Y."/>
            <person name="Yao Z."/>
            <person name="Shen Y."/>
            <person name="Qiang B."/>
            <person name="Hou Y."/>
            <person name="Yu J."/>
            <person name="Jin Q."/>
        </authorList>
    </citation>
    <scope>NUCLEOTIDE SEQUENCE [LARGE SCALE GENOMIC DNA]</scope>
    <source>
        <strain>Sb227</strain>
    </source>
</reference>
<protein>
    <recommendedName>
        <fullName evidence="1">Potassium-transporting ATPase ATP-binding subunit</fullName>
        <ecNumber evidence="1">7.2.2.6</ecNumber>
    </recommendedName>
    <alternativeName>
        <fullName evidence="1">ATP phosphohydrolase [potassium-transporting] B chain</fullName>
    </alternativeName>
    <alternativeName>
        <fullName evidence="1">Potassium-binding and translocating subunit B</fullName>
    </alternativeName>
    <alternativeName>
        <fullName evidence="1">Potassium-translocating ATPase B chain</fullName>
    </alternativeName>
</protein>
<feature type="chain" id="PRO_1000022446" description="Potassium-transporting ATPase ATP-binding subunit">
    <location>
        <begin position="1"/>
        <end position="682"/>
    </location>
</feature>
<feature type="transmembrane region" description="Helical" evidence="1">
    <location>
        <begin position="34"/>
        <end position="54"/>
    </location>
</feature>
<feature type="transmembrane region" description="Helical" evidence="1">
    <location>
        <begin position="62"/>
        <end position="82"/>
    </location>
</feature>
<feature type="transmembrane region" description="Helical" evidence="1">
    <location>
        <begin position="219"/>
        <end position="239"/>
    </location>
</feature>
<feature type="transmembrane region" description="Helical" evidence="1">
    <location>
        <begin position="254"/>
        <end position="274"/>
    </location>
</feature>
<feature type="transmembrane region" description="Helical" evidence="1">
    <location>
        <begin position="588"/>
        <end position="608"/>
    </location>
</feature>
<feature type="transmembrane region" description="Helical" evidence="1">
    <location>
        <begin position="616"/>
        <end position="636"/>
    </location>
</feature>
<feature type="transmembrane region" description="Helical" evidence="1">
    <location>
        <begin position="656"/>
        <end position="676"/>
    </location>
</feature>
<feature type="active site" description="4-aspartylphosphate intermediate" evidence="1">
    <location>
        <position position="307"/>
    </location>
</feature>
<feature type="binding site" evidence="1">
    <location>
        <position position="344"/>
    </location>
    <ligand>
        <name>ATP</name>
        <dbReference type="ChEBI" id="CHEBI:30616"/>
    </ligand>
</feature>
<feature type="binding site" evidence="1">
    <location>
        <position position="348"/>
    </location>
    <ligand>
        <name>ATP</name>
        <dbReference type="ChEBI" id="CHEBI:30616"/>
    </ligand>
</feature>
<feature type="binding site" evidence="1">
    <location>
        <begin position="377"/>
        <end position="384"/>
    </location>
    <ligand>
        <name>ATP</name>
        <dbReference type="ChEBI" id="CHEBI:30616"/>
    </ligand>
</feature>
<feature type="binding site" evidence="1">
    <location>
        <position position="395"/>
    </location>
    <ligand>
        <name>ATP</name>
        <dbReference type="ChEBI" id="CHEBI:30616"/>
    </ligand>
</feature>
<feature type="binding site" evidence="1">
    <location>
        <position position="518"/>
    </location>
    <ligand>
        <name>Mg(2+)</name>
        <dbReference type="ChEBI" id="CHEBI:18420"/>
    </ligand>
</feature>
<feature type="binding site" evidence="1">
    <location>
        <position position="522"/>
    </location>
    <ligand>
        <name>Mg(2+)</name>
        <dbReference type="ChEBI" id="CHEBI:18420"/>
    </ligand>
</feature>
<sequence>MSRKQLALFEPTLVVQALKEAVKKLNPQAQWRNPVMFIVWIGSLLTTCISIAMASGAMPGNALFSAAISGWLWVTVLFANFAEALAEGRSKAQANSLKGVKKTAFARKLREPKYGAAADKVPADQLRKGDIVLVEAGDIIPCDGEVIEGGASVDESAITGESAPVIRESGGDFASVTGGTRILSDWLVIECSVNPGETFLDRMIAMVEGAQRRKTPNEIALTILLIALTIVFLLATATLWPFSAWGGNAVSVTVLVALLVCLIPTTIGGLLSAIGVAGMSRMLGANVIATSGRAVEAAGDVDVLLLDKTGTITLGNRQASEFIPAQGVDEKTLADAAQLASLADETPEGRSIVILAKQRFNLRERDVQSLHATFVPFTAQSRMSGINIDNRMIRKGSVDAIRRHVEANGGHFPADVDQKVDQVARQGATPLVVVEGSRVLGVIALKDIVKGGIKERFAQLRKMGIKTVMITGDNRLTAAAIAAEAGVDDFLAEATPEAKLALIRQYQAEGRLVAMTGDGTNDAPALAQADIAVAMNSGTQAAKEAGNMVDLDSNPTKLIEVVHIGKQMLMTRGSLTTFSITNDVAKYFAIIPAAFAATYPQLNALNIMRLHSPDSAILSAVIFNALIIVFLIPLALKGVSYKPLTASAMLRRNLWIYGLGGLLVPFIGIKVIDLLLTVCGLV</sequence>
<gene>
    <name evidence="1" type="primary">kdpB</name>
    <name type="ordered locus">SBO_0559</name>
</gene>
<keyword id="KW-0067">ATP-binding</keyword>
<keyword id="KW-0997">Cell inner membrane</keyword>
<keyword id="KW-1003">Cell membrane</keyword>
<keyword id="KW-0406">Ion transport</keyword>
<keyword id="KW-0460">Magnesium</keyword>
<keyword id="KW-0472">Membrane</keyword>
<keyword id="KW-0479">Metal-binding</keyword>
<keyword id="KW-0547">Nucleotide-binding</keyword>
<keyword id="KW-0597">Phosphoprotein</keyword>
<keyword id="KW-0630">Potassium</keyword>
<keyword id="KW-0633">Potassium transport</keyword>
<keyword id="KW-1278">Translocase</keyword>
<keyword id="KW-0812">Transmembrane</keyword>
<keyword id="KW-1133">Transmembrane helix</keyword>
<keyword id="KW-0813">Transport</keyword>
<evidence type="ECO:0000255" key="1">
    <source>
        <dbReference type="HAMAP-Rule" id="MF_00285"/>
    </source>
</evidence>
<organism>
    <name type="scientific">Shigella boydii serotype 4 (strain Sb227)</name>
    <dbReference type="NCBI Taxonomy" id="300268"/>
    <lineage>
        <taxon>Bacteria</taxon>
        <taxon>Pseudomonadati</taxon>
        <taxon>Pseudomonadota</taxon>
        <taxon>Gammaproteobacteria</taxon>
        <taxon>Enterobacterales</taxon>
        <taxon>Enterobacteriaceae</taxon>
        <taxon>Shigella</taxon>
    </lineage>
</organism>
<name>KDPB_SHIBS</name>